<comment type="function">
    <text evidence="1">Removes 5-oxoproline from various penultimate amino acid residues except L-proline.</text>
</comment>
<comment type="catalytic activity">
    <reaction evidence="1">
        <text>Release of an N-terminal pyroglutamyl group from a polypeptide, the second amino acid generally not being Pro.</text>
        <dbReference type="EC" id="3.4.19.3"/>
    </reaction>
</comment>
<comment type="subunit">
    <text evidence="1">Homotetramer.</text>
</comment>
<comment type="subcellular location">
    <subcellularLocation>
        <location evidence="1">Cytoplasm</location>
    </subcellularLocation>
</comment>
<comment type="similarity">
    <text evidence="1">Belongs to the peptidase C15 family.</text>
</comment>
<organism>
    <name type="scientific">Cupriavidus pinatubonensis (strain JMP 134 / LMG 1197)</name>
    <name type="common">Cupriavidus necator (strain JMP 134)</name>
    <dbReference type="NCBI Taxonomy" id="264198"/>
    <lineage>
        <taxon>Bacteria</taxon>
        <taxon>Pseudomonadati</taxon>
        <taxon>Pseudomonadota</taxon>
        <taxon>Betaproteobacteria</taxon>
        <taxon>Burkholderiales</taxon>
        <taxon>Burkholderiaceae</taxon>
        <taxon>Cupriavidus</taxon>
    </lineage>
</organism>
<reference key="1">
    <citation type="journal article" date="2010" name="PLoS ONE">
        <title>The complete multipartite genome sequence of Cupriavidus necator JMP134, a versatile pollutant degrader.</title>
        <authorList>
            <person name="Lykidis A."/>
            <person name="Perez-Pantoja D."/>
            <person name="Ledger T."/>
            <person name="Mavromatis K."/>
            <person name="Anderson I.J."/>
            <person name="Ivanova N.N."/>
            <person name="Hooper S.D."/>
            <person name="Lapidus A."/>
            <person name="Lucas S."/>
            <person name="Gonzalez B."/>
            <person name="Kyrpides N.C."/>
        </authorList>
    </citation>
    <scope>NUCLEOTIDE SEQUENCE [LARGE SCALE GENOMIC DNA]</scope>
    <source>
        <strain>JMP134 / LMG 1197</strain>
    </source>
</reference>
<dbReference type="EC" id="3.4.19.3" evidence="1"/>
<dbReference type="EMBL" id="CP000090">
    <property type="protein sequence ID" value="AAZ59474.1"/>
    <property type="molecule type" value="Genomic_DNA"/>
</dbReference>
<dbReference type="SMR" id="Q477F9"/>
<dbReference type="STRING" id="264198.Reut_A0092"/>
<dbReference type="MEROPS" id="C15.001"/>
<dbReference type="KEGG" id="reu:Reut_A0092"/>
<dbReference type="eggNOG" id="COG2039">
    <property type="taxonomic scope" value="Bacteria"/>
</dbReference>
<dbReference type="HOGENOM" id="CLU_043960_4_0_4"/>
<dbReference type="OrthoDB" id="9779738at2"/>
<dbReference type="GO" id="GO:0005829">
    <property type="term" value="C:cytosol"/>
    <property type="evidence" value="ECO:0007669"/>
    <property type="project" value="InterPro"/>
</dbReference>
<dbReference type="GO" id="GO:0016920">
    <property type="term" value="F:pyroglutamyl-peptidase activity"/>
    <property type="evidence" value="ECO:0007669"/>
    <property type="project" value="UniProtKB-UniRule"/>
</dbReference>
<dbReference type="GO" id="GO:0006508">
    <property type="term" value="P:proteolysis"/>
    <property type="evidence" value="ECO:0007669"/>
    <property type="project" value="UniProtKB-KW"/>
</dbReference>
<dbReference type="CDD" id="cd00501">
    <property type="entry name" value="Peptidase_C15"/>
    <property type="match status" value="1"/>
</dbReference>
<dbReference type="FunFam" id="3.40.630.20:FF:000001">
    <property type="entry name" value="Pyrrolidone-carboxylate peptidase"/>
    <property type="match status" value="1"/>
</dbReference>
<dbReference type="Gene3D" id="3.40.630.20">
    <property type="entry name" value="Peptidase C15, pyroglutamyl peptidase I-like"/>
    <property type="match status" value="1"/>
</dbReference>
<dbReference type="HAMAP" id="MF_00417">
    <property type="entry name" value="Pyrrolid_peptidase"/>
    <property type="match status" value="1"/>
</dbReference>
<dbReference type="InterPro" id="IPR000816">
    <property type="entry name" value="Peptidase_C15"/>
</dbReference>
<dbReference type="InterPro" id="IPR016125">
    <property type="entry name" value="Peptidase_C15-like"/>
</dbReference>
<dbReference type="InterPro" id="IPR036440">
    <property type="entry name" value="Peptidase_C15-like_sf"/>
</dbReference>
<dbReference type="InterPro" id="IPR029762">
    <property type="entry name" value="PGP-I_bact-type"/>
</dbReference>
<dbReference type="InterPro" id="IPR033694">
    <property type="entry name" value="PGPEP1_Cys_AS"/>
</dbReference>
<dbReference type="NCBIfam" id="NF009676">
    <property type="entry name" value="PRK13197.1"/>
    <property type="match status" value="1"/>
</dbReference>
<dbReference type="NCBIfam" id="TIGR00504">
    <property type="entry name" value="pyro_pdase"/>
    <property type="match status" value="1"/>
</dbReference>
<dbReference type="PANTHER" id="PTHR23402">
    <property type="entry name" value="PROTEASE FAMILY C15 PYROGLUTAMYL-PEPTIDASE I-RELATED"/>
    <property type="match status" value="1"/>
</dbReference>
<dbReference type="PANTHER" id="PTHR23402:SF1">
    <property type="entry name" value="PYROGLUTAMYL-PEPTIDASE I"/>
    <property type="match status" value="1"/>
</dbReference>
<dbReference type="Pfam" id="PF01470">
    <property type="entry name" value="Peptidase_C15"/>
    <property type="match status" value="1"/>
</dbReference>
<dbReference type="PIRSF" id="PIRSF015592">
    <property type="entry name" value="Prld-crbxl_pptds"/>
    <property type="match status" value="1"/>
</dbReference>
<dbReference type="PRINTS" id="PR00706">
    <property type="entry name" value="PYROGLUPTASE"/>
</dbReference>
<dbReference type="SUPFAM" id="SSF53182">
    <property type="entry name" value="Pyrrolidone carboxyl peptidase (pyroglutamate aminopeptidase)"/>
    <property type="match status" value="1"/>
</dbReference>
<dbReference type="PROSITE" id="PS01334">
    <property type="entry name" value="PYRASE_CYS"/>
    <property type="match status" value="1"/>
</dbReference>
<protein>
    <recommendedName>
        <fullName evidence="1">Pyrrolidone-carboxylate peptidase</fullName>
        <ecNumber evidence="1">3.4.19.3</ecNumber>
    </recommendedName>
    <alternativeName>
        <fullName evidence="1">5-oxoprolyl-peptidase</fullName>
    </alternativeName>
    <alternativeName>
        <fullName evidence="1">Pyroglutamyl-peptidase I</fullName>
        <shortName evidence="1">PGP-I</shortName>
        <shortName evidence="1">Pyrase</shortName>
    </alternativeName>
</protein>
<keyword id="KW-0963">Cytoplasm</keyword>
<keyword id="KW-0378">Hydrolase</keyword>
<keyword id="KW-0645">Protease</keyword>
<keyword id="KW-0788">Thiol protease</keyword>
<gene>
    <name evidence="1" type="primary">pcp</name>
    <name type="ordered locus">Reut_A0092</name>
</gene>
<accession>Q477F9</accession>
<evidence type="ECO:0000255" key="1">
    <source>
        <dbReference type="HAMAP-Rule" id="MF_00417"/>
    </source>
</evidence>
<proteinExistence type="inferred from homology"/>
<feature type="chain" id="PRO_1000050136" description="Pyrrolidone-carboxylate peptidase">
    <location>
        <begin position="1"/>
        <end position="216"/>
    </location>
</feature>
<feature type="active site" evidence="1">
    <location>
        <position position="80"/>
    </location>
</feature>
<feature type="active site" evidence="1">
    <location>
        <position position="143"/>
    </location>
</feature>
<feature type="active site" evidence="1">
    <location>
        <position position="168"/>
    </location>
</feature>
<sequence>MRTVLLTGFEPFENEPINPSWEAVRALDGERIGDAVVVARQLPCVFGAAIDGMAALLRELKPAIAIAVGQAGGRTEMSVERVAINVDDARIADNAGAQPIDTVIAAKGPAAYFSTLPIKAIVRDMRAAGVPAAVSQTAGTFVCNHVFYGLMHALATPAGEGVRGGFIHIPYLPEQAARHPGEASMSLESMVRGIRQAIATTLATEVDVREQGGQLH</sequence>
<name>PCP_CUPPJ</name>